<proteinExistence type="evidence at transcript level"/>
<dbReference type="EMBL" id="X61096">
    <property type="protein sequence ID" value="CAA43409.1"/>
    <property type="molecule type" value="Genomic_DNA"/>
</dbReference>
<dbReference type="PIR" id="I40859">
    <property type="entry name" value="A40371"/>
</dbReference>
<dbReference type="GO" id="GO:0009279">
    <property type="term" value="C:cell outer membrane"/>
    <property type="evidence" value="ECO:0007669"/>
    <property type="project" value="UniProtKB-SubCell"/>
</dbReference>
<dbReference type="GO" id="GO:0046930">
    <property type="term" value="C:pore complex"/>
    <property type="evidence" value="ECO:0007669"/>
    <property type="project" value="UniProtKB-KW"/>
</dbReference>
<dbReference type="GO" id="GO:0015288">
    <property type="term" value="F:porin activity"/>
    <property type="evidence" value="ECO:0007669"/>
    <property type="project" value="UniProtKB-KW"/>
</dbReference>
<dbReference type="GO" id="GO:0005198">
    <property type="term" value="F:structural molecule activity"/>
    <property type="evidence" value="ECO:0007669"/>
    <property type="project" value="InterPro"/>
</dbReference>
<dbReference type="GO" id="GO:0006811">
    <property type="term" value="P:monoatomic ion transport"/>
    <property type="evidence" value="ECO:0007669"/>
    <property type="project" value="UniProtKB-KW"/>
</dbReference>
<dbReference type="GO" id="GO:0008360">
    <property type="term" value="P:regulation of cell shape"/>
    <property type="evidence" value="ECO:0007669"/>
    <property type="project" value="UniProtKB-KW"/>
</dbReference>
<dbReference type="InterPro" id="IPR000604">
    <property type="entry name" value="Major_OMP_Chlamydia"/>
</dbReference>
<dbReference type="Pfam" id="PF01308">
    <property type="entry name" value="Chlam_OMP"/>
    <property type="match status" value="1"/>
</dbReference>
<dbReference type="PRINTS" id="PR01334">
    <property type="entry name" value="CHLAMIDIAOMP"/>
</dbReference>
<evidence type="ECO:0000250" key="1"/>
<evidence type="ECO:0000305" key="2"/>
<keyword id="KW-0998">Cell outer membrane</keyword>
<keyword id="KW-0133">Cell shape</keyword>
<keyword id="KW-1015">Disulfide bond</keyword>
<keyword id="KW-0406">Ion transport</keyword>
<keyword id="KW-0472">Membrane</keyword>
<keyword id="KW-0626">Porin</keyword>
<keyword id="KW-0732">Signal</keyword>
<keyword id="KW-0812">Transmembrane</keyword>
<keyword id="KW-1134">Transmembrane beta strand</keyword>
<keyword id="KW-0813">Transport</keyword>
<gene>
    <name type="primary">ompA</name>
    <name type="synonym">omp1</name>
</gene>
<feature type="signal peptide">
    <location>
        <begin position="1"/>
        <end position="22"/>
    </location>
</feature>
<feature type="chain" id="PRO_0000020143" description="Major outer membrane porin">
    <location>
        <begin position="23"/>
        <end position="392"/>
    </location>
</feature>
<accession>Q00087</accession>
<comment type="function">
    <text evidence="1">In elementary bodies (EBs, the infectious stage, which is able to survive outside the host cell) provides the structural integrity of the outer envelope through disulfide cross-links with the small cysteine-rich protein and the large cysteine-rich periplasmic protein. It has been described in publications as the Sarkosyl-insoluble COMC (Chlamydia outer membrane complex), and serves as the functional equivalent of peptidoglycan (By similarity).</text>
</comment>
<comment type="function">
    <text evidence="1">Permits diffusion of specific solutes through the outer membrane.</text>
</comment>
<comment type="subunit">
    <text>Part of a disulfide cross-linked outer membrane complex (COMC) composed of the major outer membrane porin (MOMP), the small cysteine-rich protein (OmcA) and the large cysteine-rich periplasmic protein (OmcB).</text>
</comment>
<comment type="subcellular location">
    <subcellularLocation>
        <location evidence="1">Cell outer membrane</location>
        <topology evidence="1">Multi-pass membrane protein</topology>
    </subcellularLocation>
</comment>
<comment type="developmental stage">
    <text>It is present but some of the disulfide bonds are reduced in reticulate bodies (RBs).</text>
</comment>
<comment type="similarity">
    <text evidence="2">Belongs to the chlamydial porin (CP) (TC 1.B.2) family.</text>
</comment>
<reference key="1">
    <citation type="journal article" date="1993" name="J. Gen. Microbiol.">
        <title>Evidence for Chlamydia pneumoniae of non-human origin.</title>
        <authorList>
            <person name="Storey C."/>
            <person name="Lusher M."/>
            <person name="Yates P."/>
            <person name="Richmond S."/>
        </authorList>
    </citation>
    <scope>NUCLEOTIDE SEQUENCE [GENOMIC DNA]</scope>
    <source>
        <strain>FPN/PRING</strain>
    </source>
</reference>
<name>MOMPP_CHLPS</name>
<organism>
    <name type="scientific">Chlamydia psittaci</name>
    <name type="common">Chlamydophila psittaci</name>
    <dbReference type="NCBI Taxonomy" id="83554"/>
    <lineage>
        <taxon>Bacteria</taxon>
        <taxon>Pseudomonadati</taxon>
        <taxon>Chlamydiota</taxon>
        <taxon>Chlamydiia</taxon>
        <taxon>Chlamydiales</taxon>
        <taxon>Chlamydiaceae</taxon>
        <taxon>Chlamydia/Chlamydophila group</taxon>
        <taxon>Chlamydia</taxon>
    </lineage>
</organism>
<sequence>MKKLLKSALLFAAAGSALSLQALPVGNPAEPSLLIDGTMWEGASGDPCDPCATWCDAISIRAGFYGDYVFDRILKVDVNKTISGMAAAPTAASGTASNTTVAADRSNFAYGKHLQDAEWCTNAAYLALNIWDRFDVFCTLGASNGYFKASSDAFNLVGLIGLAGTDFANQRPNVEISQGIVELYTDTAFSWSVGARGALWECGCATLGAEFQYAQSNPKIEMLNVTSSPAQFMIHKPRGYKGTAANFPLPVAAGTATATDTKSATVKYHEWQVGLALSYRLNMLVPYIGVNWSRATFDADTIRIAQPKLASAILNLTTWNPTLLGVATTLDTSNKYADFMQIVSMQINKMKSRKACGIAVGATLIDADKWSITGEARLIDERAAHINAQFRF</sequence>
<protein>
    <recommendedName>
        <fullName>Major outer membrane porin</fullName>
        <shortName>MOMP</shortName>
    </recommendedName>
</protein>